<gene>
    <name evidence="1" type="primary">hdfR</name>
    <name type="ordered locus">UTI89_C4320</name>
</gene>
<sequence>MDTELLKTFLEVSRTRHFGRAAESLYLTQSAVSFRIRQLENQLGVNLFTRHRNNIRLTAAGEKLLPYAETLMSTWQAARKEVAHTSRHNEFSIGASASLWECMLNQWLGRLYQNQDVHTGLQFEARIAQRQSLVKQLHERQLDLLITTEAPKMDEFCSQLLGYFTLALYTSAPSKLKGDLNYLRLEWGPDFQQHEAGLIGADEVPILTTSSAELAQQQIAMLNGCTWLPVSWARKKGGLHTVVDSTTLSRPLYAIWLQNSDKNALIRDLLKINVLDEVY</sequence>
<evidence type="ECO:0000255" key="1">
    <source>
        <dbReference type="HAMAP-Rule" id="MF_01233"/>
    </source>
</evidence>
<evidence type="ECO:0000305" key="2"/>
<keyword id="KW-0238">DNA-binding</keyword>
<keyword id="KW-0678">Repressor</keyword>
<keyword id="KW-0804">Transcription</keyword>
<keyword id="KW-0805">Transcription regulation</keyword>
<organism>
    <name type="scientific">Escherichia coli (strain UTI89 / UPEC)</name>
    <dbReference type="NCBI Taxonomy" id="364106"/>
    <lineage>
        <taxon>Bacteria</taxon>
        <taxon>Pseudomonadati</taxon>
        <taxon>Pseudomonadota</taxon>
        <taxon>Gammaproteobacteria</taxon>
        <taxon>Enterobacterales</taxon>
        <taxon>Enterobacteriaceae</taxon>
        <taxon>Escherichia</taxon>
    </lineage>
</organism>
<comment type="function">
    <text evidence="1">Negatively regulates the transcription of the flagellar master operon flhDC by binding to the upstream region of the operon.</text>
</comment>
<comment type="similarity">
    <text evidence="2">Belongs to the LysR transcriptional regulatory family.</text>
</comment>
<dbReference type="EMBL" id="CP000243">
    <property type="protein sequence ID" value="ABE09741.1"/>
    <property type="molecule type" value="Genomic_DNA"/>
</dbReference>
<dbReference type="RefSeq" id="WP_000379257.1">
    <property type="nucleotide sequence ID" value="NZ_CP064825.1"/>
</dbReference>
<dbReference type="SMR" id="Q1R4H3"/>
<dbReference type="KEGG" id="eci:UTI89_C4320"/>
<dbReference type="HOGENOM" id="CLU_039613_8_2_6"/>
<dbReference type="Proteomes" id="UP000001952">
    <property type="component" value="Chromosome"/>
</dbReference>
<dbReference type="GO" id="GO:0003677">
    <property type="term" value="F:DNA binding"/>
    <property type="evidence" value="ECO:0007669"/>
    <property type="project" value="UniProtKB-KW"/>
</dbReference>
<dbReference type="GO" id="GO:0003700">
    <property type="term" value="F:DNA-binding transcription factor activity"/>
    <property type="evidence" value="ECO:0007669"/>
    <property type="project" value="UniProtKB-UniRule"/>
</dbReference>
<dbReference type="GO" id="GO:0045892">
    <property type="term" value="P:negative regulation of DNA-templated transcription"/>
    <property type="evidence" value="ECO:0007669"/>
    <property type="project" value="UniProtKB-UniRule"/>
</dbReference>
<dbReference type="FunFam" id="1.10.10.10:FF:000001">
    <property type="entry name" value="LysR family transcriptional regulator"/>
    <property type="match status" value="1"/>
</dbReference>
<dbReference type="Gene3D" id="3.40.190.10">
    <property type="entry name" value="Periplasmic binding protein-like II"/>
    <property type="match status" value="2"/>
</dbReference>
<dbReference type="Gene3D" id="1.10.10.10">
    <property type="entry name" value="Winged helix-like DNA-binding domain superfamily/Winged helix DNA-binding domain"/>
    <property type="match status" value="1"/>
</dbReference>
<dbReference type="HAMAP" id="MF_01233">
    <property type="entry name" value="HTH_type_HdfR"/>
    <property type="match status" value="1"/>
</dbReference>
<dbReference type="InterPro" id="IPR050176">
    <property type="entry name" value="LTTR"/>
</dbReference>
<dbReference type="InterPro" id="IPR005119">
    <property type="entry name" value="LysR_subst-bd"/>
</dbReference>
<dbReference type="InterPro" id="IPR020890">
    <property type="entry name" value="Tscrpt_reg_HTH_HdfR"/>
</dbReference>
<dbReference type="InterPro" id="IPR000847">
    <property type="entry name" value="Tscrpt_reg_HTH_LysR"/>
</dbReference>
<dbReference type="InterPro" id="IPR036388">
    <property type="entry name" value="WH-like_DNA-bd_sf"/>
</dbReference>
<dbReference type="InterPro" id="IPR036390">
    <property type="entry name" value="WH_DNA-bd_sf"/>
</dbReference>
<dbReference type="NCBIfam" id="NF002946">
    <property type="entry name" value="PRK03601.1"/>
    <property type="match status" value="1"/>
</dbReference>
<dbReference type="PANTHER" id="PTHR30579:SF8">
    <property type="entry name" value="HTH-TYPE TRANSCRIPTIONAL REGULATOR HDFR"/>
    <property type="match status" value="1"/>
</dbReference>
<dbReference type="PANTHER" id="PTHR30579">
    <property type="entry name" value="TRANSCRIPTIONAL REGULATOR"/>
    <property type="match status" value="1"/>
</dbReference>
<dbReference type="Pfam" id="PF00126">
    <property type="entry name" value="HTH_1"/>
    <property type="match status" value="1"/>
</dbReference>
<dbReference type="Pfam" id="PF03466">
    <property type="entry name" value="LysR_substrate"/>
    <property type="match status" value="1"/>
</dbReference>
<dbReference type="PRINTS" id="PR00039">
    <property type="entry name" value="HTHLYSR"/>
</dbReference>
<dbReference type="SUPFAM" id="SSF53850">
    <property type="entry name" value="Periplasmic binding protein-like II"/>
    <property type="match status" value="1"/>
</dbReference>
<dbReference type="SUPFAM" id="SSF46785">
    <property type="entry name" value="Winged helix' DNA-binding domain"/>
    <property type="match status" value="1"/>
</dbReference>
<dbReference type="PROSITE" id="PS50931">
    <property type="entry name" value="HTH_LYSR"/>
    <property type="match status" value="1"/>
</dbReference>
<name>HDFR_ECOUT</name>
<reference key="1">
    <citation type="journal article" date="2006" name="Proc. Natl. Acad. Sci. U.S.A.">
        <title>Identification of genes subject to positive selection in uropathogenic strains of Escherichia coli: a comparative genomics approach.</title>
        <authorList>
            <person name="Chen S.L."/>
            <person name="Hung C.-S."/>
            <person name="Xu J."/>
            <person name="Reigstad C.S."/>
            <person name="Magrini V."/>
            <person name="Sabo A."/>
            <person name="Blasiar D."/>
            <person name="Bieri T."/>
            <person name="Meyer R.R."/>
            <person name="Ozersky P."/>
            <person name="Armstrong J.R."/>
            <person name="Fulton R.S."/>
            <person name="Latreille J.P."/>
            <person name="Spieth J."/>
            <person name="Hooton T.M."/>
            <person name="Mardis E.R."/>
            <person name="Hultgren S.J."/>
            <person name="Gordon J.I."/>
        </authorList>
    </citation>
    <scope>NUCLEOTIDE SEQUENCE [LARGE SCALE GENOMIC DNA]</scope>
    <source>
        <strain>UTI89 / UPEC</strain>
    </source>
</reference>
<accession>Q1R4H3</accession>
<protein>
    <recommendedName>
        <fullName evidence="1">HTH-type transcriptional regulator HdfR</fullName>
    </recommendedName>
    <alternativeName>
        <fullName evidence="1">H-NS-dependent flhDC regulator</fullName>
    </alternativeName>
</protein>
<feature type="chain" id="PRO_1000066895" description="HTH-type transcriptional regulator HdfR">
    <location>
        <begin position="1"/>
        <end position="279"/>
    </location>
</feature>
<feature type="domain" description="HTH lysR-type" evidence="1">
    <location>
        <begin position="1"/>
        <end position="58"/>
    </location>
</feature>
<feature type="DNA-binding region" description="H-T-H motif" evidence="1">
    <location>
        <begin position="18"/>
        <end position="37"/>
    </location>
</feature>
<proteinExistence type="inferred from homology"/>